<proteinExistence type="inferred from homology"/>
<sequence>MPLIEVDLLNPTAASEAKAHKMKRLVPTPNSYFLEIKCPKCGATTTTFSHAHRQILCQKCGQPLGQPTGGKLKLTQQCKFRIKK</sequence>
<protein>
    <recommendedName>
        <fullName evidence="4">Small ribosomal subunit protein eS27</fullName>
    </recommendedName>
    <alternativeName>
        <fullName>40S ribosomal protein S27</fullName>
    </alternativeName>
    <alternativeName>
        <fullName>EHZC3 protein</fullName>
    </alternativeName>
</protein>
<organism evidence="5">
    <name type="scientific">Entamoeba histolytica (strain ATCC 30459 / HM-1:IMSS / ABRM)</name>
    <dbReference type="NCBI Taxonomy" id="294381"/>
    <lineage>
        <taxon>Eukaryota</taxon>
        <taxon>Amoebozoa</taxon>
        <taxon>Evosea</taxon>
        <taxon>Archamoebae</taxon>
        <taxon>Mastigamoebida</taxon>
        <taxon>Entamoebidae</taxon>
        <taxon>Entamoeba</taxon>
    </lineage>
</organism>
<keyword id="KW-0963">Cytoplasm</keyword>
<keyword id="KW-0479">Metal-binding</keyword>
<keyword id="KW-1185">Reference proteome</keyword>
<keyword id="KW-0687">Ribonucleoprotein</keyword>
<keyword id="KW-0689">Ribosomal protein</keyword>
<keyword id="KW-0862">Zinc</keyword>
<keyword id="KW-0863">Zinc-finger</keyword>
<name>RS27_ENTH1</name>
<evidence type="ECO:0000250" key="1">
    <source>
        <dbReference type="UniProtKB" id="P35997"/>
    </source>
</evidence>
<evidence type="ECO:0000250" key="2">
    <source>
        <dbReference type="UniProtKB" id="P42677"/>
    </source>
</evidence>
<evidence type="ECO:0000255" key="3"/>
<evidence type="ECO:0000305" key="4"/>
<evidence type="ECO:0000312" key="5">
    <source>
        <dbReference type="EMBL" id="EAL44817.1"/>
    </source>
</evidence>
<dbReference type="EMBL" id="M77240">
    <property type="protein sequence ID" value="AAA29118.1"/>
    <property type="molecule type" value="mRNA"/>
</dbReference>
<dbReference type="EMBL" id="L36245">
    <property type="protein sequence ID" value="AAB67324.1"/>
    <property type="molecule type" value="mRNA"/>
</dbReference>
<dbReference type="EMBL" id="DS571181">
    <property type="protein sequence ID" value="EAL44817.1"/>
    <property type="molecule type" value="Genomic_DNA"/>
</dbReference>
<dbReference type="PIR" id="A45631">
    <property type="entry name" value="A45631"/>
</dbReference>
<dbReference type="RefSeq" id="XP_650200.1">
    <property type="nucleotide sequence ID" value="XM_645108.1"/>
</dbReference>
<dbReference type="SMR" id="P38654"/>
<dbReference type="STRING" id="5759.C4LYP4"/>
<dbReference type="EnsemblProtists" id="GAT93951">
    <property type="protein sequence ID" value="GAT93951"/>
    <property type="gene ID" value="CL6EHI_004200"/>
</dbReference>
<dbReference type="EnsemblProtists" id="rna_EHI_004200-1">
    <property type="protein sequence ID" value="rna_EHI_004200-1"/>
    <property type="gene ID" value="EHI_004200"/>
</dbReference>
<dbReference type="GeneID" id="3404501"/>
<dbReference type="KEGG" id="ehi:EHI_004200"/>
<dbReference type="VEuPathDB" id="AmoebaDB:EHI5A_051140"/>
<dbReference type="VEuPathDB" id="AmoebaDB:EHI7A_106010"/>
<dbReference type="VEuPathDB" id="AmoebaDB:EHI8A_113160"/>
<dbReference type="VEuPathDB" id="AmoebaDB:EHI_004200"/>
<dbReference type="VEuPathDB" id="AmoebaDB:KM1_038130"/>
<dbReference type="eggNOG" id="KOG1779">
    <property type="taxonomic scope" value="Eukaryota"/>
</dbReference>
<dbReference type="HOGENOM" id="CLU_130128_3_0_1"/>
<dbReference type="OMA" id="ERINMPL"/>
<dbReference type="OrthoDB" id="13343at2759"/>
<dbReference type="Proteomes" id="UP000001926">
    <property type="component" value="Partially assembled WGS sequence"/>
</dbReference>
<dbReference type="GO" id="GO:0022627">
    <property type="term" value="C:cytosolic small ribosomal subunit"/>
    <property type="evidence" value="ECO:0000318"/>
    <property type="project" value="GO_Central"/>
</dbReference>
<dbReference type="GO" id="GO:0003723">
    <property type="term" value="F:RNA binding"/>
    <property type="evidence" value="ECO:0000318"/>
    <property type="project" value="GO_Central"/>
</dbReference>
<dbReference type="GO" id="GO:0003735">
    <property type="term" value="F:structural constituent of ribosome"/>
    <property type="evidence" value="ECO:0000318"/>
    <property type="project" value="GO_Central"/>
</dbReference>
<dbReference type="GO" id="GO:0008270">
    <property type="term" value="F:zinc ion binding"/>
    <property type="evidence" value="ECO:0007669"/>
    <property type="project" value="UniProtKB-KW"/>
</dbReference>
<dbReference type="GO" id="GO:0000028">
    <property type="term" value="P:ribosomal small subunit assembly"/>
    <property type="evidence" value="ECO:0000318"/>
    <property type="project" value="GO_Central"/>
</dbReference>
<dbReference type="GO" id="GO:0006412">
    <property type="term" value="P:translation"/>
    <property type="evidence" value="ECO:0007669"/>
    <property type="project" value="InterPro"/>
</dbReference>
<dbReference type="FunFam" id="2.20.25.100:FF:000001">
    <property type="entry name" value="40S ribosomal protein S27"/>
    <property type="match status" value="1"/>
</dbReference>
<dbReference type="Gene3D" id="2.20.25.100">
    <property type="entry name" value="Zn-binding ribosomal proteins"/>
    <property type="match status" value="1"/>
</dbReference>
<dbReference type="HAMAP" id="MF_00371">
    <property type="entry name" value="Ribosomal_eS27"/>
    <property type="match status" value="1"/>
</dbReference>
<dbReference type="InterPro" id="IPR000592">
    <property type="entry name" value="Ribosomal_eS27"/>
</dbReference>
<dbReference type="InterPro" id="IPR023407">
    <property type="entry name" value="Ribosomal_eS27_Zn-bd_dom_sf"/>
</dbReference>
<dbReference type="InterPro" id="IPR011332">
    <property type="entry name" value="Ribosomal_zn-bd"/>
</dbReference>
<dbReference type="PANTHER" id="PTHR11594">
    <property type="entry name" value="40S RIBOSOMAL PROTEIN S27"/>
    <property type="match status" value="1"/>
</dbReference>
<dbReference type="Pfam" id="PF01667">
    <property type="entry name" value="Ribosomal_S27e"/>
    <property type="match status" value="1"/>
</dbReference>
<dbReference type="SUPFAM" id="SSF57829">
    <property type="entry name" value="Zn-binding ribosomal proteins"/>
    <property type="match status" value="1"/>
</dbReference>
<dbReference type="PROSITE" id="PS01168">
    <property type="entry name" value="RIBOSOMAL_S27E"/>
    <property type="match status" value="1"/>
</dbReference>
<gene>
    <name type="primary">RPS27</name>
    <name type="synonym">EHZC3</name>
    <name evidence="5" type="ORF">EHI_004200</name>
</gene>
<comment type="function">
    <text evidence="2">Component of the small ribosomal subunit. The ribosome is a large ribonucleoprotein complex responsible for the synthesis of proteins in the cell. Required for proper rRNA processing and maturation of 18S rRNAs.</text>
</comment>
<comment type="cofactor">
    <cofactor evidence="4">
        <name>Zn(2+)</name>
        <dbReference type="ChEBI" id="CHEBI:29105"/>
    </cofactor>
    <text evidence="4">Binds 1 zinc ion per subunit.</text>
</comment>
<comment type="subunit">
    <text evidence="1">Component of the small ribosomal subunit.</text>
</comment>
<comment type="subcellular location">
    <subcellularLocation>
        <location evidence="1">Cytoplasm</location>
    </subcellularLocation>
</comment>
<comment type="similarity">
    <text evidence="4">Belongs to the eukaryotic ribosomal protein eS27 family.</text>
</comment>
<feature type="chain" id="PRO_0000149064" description="Small ribosomal subunit protein eS27">
    <location>
        <begin position="1"/>
        <end position="84"/>
    </location>
</feature>
<feature type="zinc finger region" description="C4-type" evidence="3">
    <location>
        <begin position="38"/>
        <end position="60"/>
    </location>
</feature>
<feature type="sequence conflict" description="In Ref. 2; AAB67324." evidence="4" ref="2">
    <original>L</original>
    <variation>V</variation>
    <location>
        <position position="56"/>
    </location>
</feature>
<feature type="sequence conflict" description="In Ref. 2; AAB67324." evidence="4" ref="2">
    <original>C</original>
    <variation>R</variation>
    <location>
        <position position="78"/>
    </location>
</feature>
<accession>P38654</accession>
<accession>A0A175JJT2</accession>
<accession>C4LYP4</accession>
<reference key="1">
    <citation type="journal article" date="1992" name="Mol. Biochem. Parasitol.">
        <title>Isolation of an Entamoeba histolytica cDNA clone encoding a protein with a putative zinc finger domain.</title>
        <authorList>
            <person name="Stanley S.L. Jr."/>
            <person name="Li E."/>
        </authorList>
    </citation>
    <scope>NUCLEOTIDE SEQUENCE [MRNA]</scope>
</reference>
<reference key="2">
    <citation type="submission" date="1994-09" db="EMBL/GenBank/DDBJ databases">
        <authorList>
            <person name="Tanaka T."/>
        </authorList>
    </citation>
    <scope>NUCLEOTIDE SEQUENCE [MRNA]</scope>
    <source>
        <strain>ATCC 30459 / HM-1:IMSS / ABRM</strain>
    </source>
</reference>
<reference evidence="5" key="3">
    <citation type="journal article" date="2005" name="Nature">
        <title>The genome of the protist parasite Entamoeba histolytica.</title>
        <authorList>
            <person name="Loftus B.J."/>
            <person name="Anderson I."/>
            <person name="Davies R."/>
            <person name="Alsmark U.C."/>
            <person name="Samuelson J."/>
            <person name="Amedeo P."/>
            <person name="Roncaglia P."/>
            <person name="Berriman M."/>
            <person name="Hirt R.P."/>
            <person name="Mann B.J."/>
            <person name="Nozaki T."/>
            <person name="Suh B."/>
            <person name="Pop M."/>
            <person name="Duchene M."/>
            <person name="Ackers J."/>
            <person name="Tannich E."/>
            <person name="Leippe M."/>
            <person name="Hofer M."/>
            <person name="Bruchhaus I."/>
            <person name="Willhoeft U."/>
            <person name="Bhattacharya A."/>
            <person name="Chillingworth T."/>
            <person name="Churcher C.M."/>
            <person name="Hance Z."/>
            <person name="Harris B."/>
            <person name="Harris D."/>
            <person name="Jagels K."/>
            <person name="Moule S."/>
            <person name="Mungall K.L."/>
            <person name="Ormond D."/>
            <person name="Squares R."/>
            <person name="Whitehead S."/>
            <person name="Quail M.A."/>
            <person name="Rabbinowitsch E."/>
            <person name="Norbertczak H."/>
            <person name="Price C."/>
            <person name="Wang Z."/>
            <person name="Guillen N."/>
            <person name="Gilchrist C."/>
            <person name="Stroup S.E."/>
            <person name="Bhattacharya S."/>
            <person name="Lohia A."/>
            <person name="Foster P.G."/>
            <person name="Sicheritz-Ponten T."/>
            <person name="Weber C."/>
            <person name="Singh U."/>
            <person name="Mukherjee C."/>
            <person name="El-Sayed N.M.A."/>
            <person name="Petri W.A."/>
            <person name="Clark C.G."/>
            <person name="Embley T.M."/>
            <person name="Barrell B.G."/>
            <person name="Fraser C.M."/>
            <person name="Hall N."/>
        </authorList>
    </citation>
    <scope>NUCLEOTIDE SEQUENCE [LARGE SCALE GENOMIC DNA]</scope>
    <source>
        <strain evidence="5">ATCC 30459 / HM-1:IMSS / ABRM</strain>
    </source>
</reference>